<keyword id="KW-0238">DNA-binding</keyword>
<keyword id="KW-0539">Nucleus</keyword>
<keyword id="KW-1185">Reference proteome</keyword>
<sequence length="409" mass="46085">MRSPPREARLRMAVEAIGKNKNLSIRAAARQYNVPEATIRHRCTGRSARRDLPANSRKLTDLEERTIVQYILELDARAFPPRLRGVEDMANHLLRERDAPPVGKLWAHNFVKRQPQLRTRRTRRYDYQRAKCEDPKVIGEWFTLVQDAKAKYGIVDDDVYNFDETGLMMGIIFAGQAYGRLIDELMRAHINHITKLEFLCAFREAFFASMTEKNIQGGFSGAGIVPFDPERVLSKLDVKLHTPTHPDSRPGTAQPWASKTPYNAQETRSQSDFIKTRISSYQNSSPASVLVAVDQLTKGATAVMHQVALLQSEVSSLRKANEPLSKRRKAKRTRIQLGGPLTVQDAQDPLDQRDVGKGALQETQPDSSGAGGARAKVRRCNSCCKVGESASLAYMRRSLIIYVRSYNDF</sequence>
<evidence type="ECO:0000255" key="1">
    <source>
        <dbReference type="PROSITE-ProRule" id="PRU00583"/>
    </source>
</evidence>
<evidence type="ECO:0000256" key="2">
    <source>
        <dbReference type="SAM" id="MobiDB-lite"/>
    </source>
</evidence>
<evidence type="ECO:0000269" key="3">
    <source>
    </source>
</evidence>
<evidence type="ECO:0000269" key="4">
    <source>
    </source>
</evidence>
<evidence type="ECO:0000303" key="5">
    <source>
    </source>
</evidence>
<evidence type="ECO:0000305" key="6">
    <source>
    </source>
</evidence>
<proteinExistence type="evidence at transcript level"/>
<name>CHEC_CHAGB</name>
<feature type="chain" id="PRO_0000452798" description="Chaetoglobosin A biosynthesis cluster protein C">
    <location>
        <begin position="1"/>
        <end position="409"/>
    </location>
</feature>
<feature type="domain" description="HTH CENPB-type" evidence="1">
    <location>
        <begin position="51"/>
        <end position="120"/>
    </location>
</feature>
<feature type="DNA-binding region" description="H-T-H motif" evidence="1">
    <location>
        <begin position="84"/>
        <end position="113"/>
    </location>
</feature>
<feature type="region of interest" description="Disordered" evidence="2">
    <location>
        <begin position="243"/>
        <end position="269"/>
    </location>
</feature>
<feature type="region of interest" description="Disordered" evidence="2">
    <location>
        <begin position="320"/>
        <end position="350"/>
    </location>
</feature>
<feature type="compositionally biased region" description="Polar residues" evidence="2">
    <location>
        <begin position="255"/>
        <end position="269"/>
    </location>
</feature>
<dbReference type="EMBL" id="CH408029">
    <property type="protein sequence ID" value="EAQ93003.1"/>
    <property type="molecule type" value="Genomic_DNA"/>
</dbReference>
<dbReference type="RefSeq" id="XP_001220459.1">
    <property type="nucleotide sequence ID" value="XM_001220458.1"/>
</dbReference>
<dbReference type="SMR" id="Q2HEW6"/>
<dbReference type="GeneID" id="4387644"/>
<dbReference type="VEuPathDB" id="FungiDB:CHGG_01238"/>
<dbReference type="eggNOG" id="KOG3105">
    <property type="taxonomic scope" value="Eukaryota"/>
</dbReference>
<dbReference type="HOGENOM" id="CLU_013929_4_1_1"/>
<dbReference type="InParanoid" id="Q2HEW6"/>
<dbReference type="OMA" id="RRTELKC"/>
<dbReference type="OrthoDB" id="4589250at2759"/>
<dbReference type="Proteomes" id="UP000001056">
    <property type="component" value="Unassembled WGS sequence"/>
</dbReference>
<dbReference type="GO" id="GO:0005634">
    <property type="term" value="C:nucleus"/>
    <property type="evidence" value="ECO:0007669"/>
    <property type="project" value="UniProtKB-SubCell"/>
</dbReference>
<dbReference type="GO" id="GO:0003677">
    <property type="term" value="F:DNA binding"/>
    <property type="evidence" value="ECO:0007669"/>
    <property type="project" value="UniProtKB-KW"/>
</dbReference>
<dbReference type="Gene3D" id="1.10.10.60">
    <property type="entry name" value="Homeodomain-like"/>
    <property type="match status" value="1"/>
</dbReference>
<dbReference type="InterPro" id="IPR009057">
    <property type="entry name" value="Homeodomain-like_sf"/>
</dbReference>
<dbReference type="InterPro" id="IPR006600">
    <property type="entry name" value="HTH_CenpB_DNA-bd_dom"/>
</dbReference>
<dbReference type="InterPro" id="IPR007889">
    <property type="entry name" value="HTH_Psq"/>
</dbReference>
<dbReference type="Pfam" id="PF05225">
    <property type="entry name" value="HTH_psq"/>
    <property type="match status" value="1"/>
</dbReference>
<dbReference type="Pfam" id="PF03221">
    <property type="entry name" value="HTH_Tnp_Tc5"/>
    <property type="match status" value="1"/>
</dbReference>
<dbReference type="SUPFAM" id="SSF46689">
    <property type="entry name" value="Homeodomain-like"/>
    <property type="match status" value="1"/>
</dbReference>
<dbReference type="PROSITE" id="PS51253">
    <property type="entry name" value="HTH_CENPB"/>
    <property type="match status" value="1"/>
</dbReference>
<comment type="function">
    <text evidence="3 4 6">Part of the gene cluster that mediates the biosynthesis of chaetoglobosin A which has a unique inhibitory activity against actin polymerization in mammalian cells (PubMed:23611317, PubMed:33622536). Chaetoglobosin A and its intermediates are involved in the morphological differentiation of C.globosum (PubMed:33622536). The first step of the pathway is the synthesis of prochaetoglobosin I via condensation of one acetyl-CoA, 8 malonyl-CoA, and a L-tryptophan molecule by the PKS-NRPS hybrid synthetase cheA, followed by reduction of backbone double bond to install desired geometry by the enoyl reductase cheB (PubMed:23611317). Further multiple oxidation steps performed by the cytochrome P450 monooxygenases cheE and cheG, as well as by the FAD-linked oxidoreductase cheF, lead to the formation of chaetoglobosin A (PubMed:23611317). Depending on the order of action of these reductases, distinct intermediates can be identified (PubMed:23611317). Within the pathway, the cytochrome P450 monooxygenase cheE catalyzes a stereospecific epoxidation on prochaetoglobosin I, cytoglobosin D, and chaetoglobosin J intermediates (PubMed:23611317). The FAD-linked oxidoreductase cheF performs dehydrogenation of the C-20 hydroxyl groups in the 20-dihyrochaetoglobosin A and cytoglobosin D intermediates (PubMed:23611317). Finally, the cytochrome P450 monooxygenase cheG can catalyze the stereospecific dihydroxylation of prochaetoglobosin I and prochaetoglobosin IV at C-19 and C-20, respectively (PubMed:23611317). The Diels-Alderase cheD may play a role in the post-PKS-NRPS biosynthetic steps catalyzing Diels-Alder cyclization (Probable).</text>
</comment>
<comment type="subcellular location">
    <subcellularLocation>
        <location evidence="1">Nucleus</location>
    </subcellularLocation>
</comment>
<comment type="induction">
    <text evidence="4">Expression is positively regulated by the cluster-specific transcription factor cheR that binds directly to an asymmetric direct repeat present in the promoter.</text>
</comment>
<gene>
    <name evidence="5" type="primary">cheC</name>
    <name type="ORF">CHGG_01238</name>
</gene>
<protein>
    <recommendedName>
        <fullName evidence="5">Chaetoglobosin A biosynthesis cluster protein C</fullName>
    </recommendedName>
</protein>
<reference key="1">
    <citation type="journal article" date="2015" name="Genome Announc.">
        <title>Draft genome sequence of the cellulolytic fungus Chaetomium globosum.</title>
        <authorList>
            <person name="Cuomo C.A."/>
            <person name="Untereiner W.A."/>
            <person name="Ma L.-J."/>
            <person name="Grabherr M."/>
            <person name="Birren B.W."/>
        </authorList>
    </citation>
    <scope>NUCLEOTIDE SEQUENCE [LARGE SCALE GENOMIC DNA]</scope>
    <source>
        <strain>ATCC 6205 / CBS 148.51 / DSM 1962 / NBRC 6347 / NRRL 1970</strain>
    </source>
</reference>
<reference key="2">
    <citation type="journal article" date="2013" name="J. Am. Chem. Soc.">
        <title>Combinatorial generation of complexity by redox enzymes in the chaetoglobosin A biosynthesis.</title>
        <authorList>
            <person name="Ishiuchi K."/>
            <person name="Nakazawa T."/>
            <person name="Yagishita F."/>
            <person name="Mino T."/>
            <person name="Noguchi H."/>
            <person name="Hotta K."/>
            <person name="Watanabe K."/>
        </authorList>
    </citation>
    <scope>FUNCTION</scope>
</reference>
<reference key="3">
    <citation type="journal article" date="2021" name="Fungal Biol.">
        <title>Functional analysis of a chaetoglobosin A biosynthetic regulator in Chaetomium globosum.</title>
        <authorList>
            <person name="Cheng M."/>
            <person name="Zhao S."/>
            <person name="Liu H."/>
            <person name="Liu Y."/>
            <person name="Lin C."/>
            <person name="Song J."/>
            <person name="Thawai C."/>
            <person name="Charoensettasilp S."/>
            <person name="Yang Q."/>
        </authorList>
    </citation>
    <scope>FUNCTION</scope>
    <scope>INDUCTION</scope>
</reference>
<accession>Q2HEW6</accession>
<organism>
    <name type="scientific">Chaetomium globosum (strain ATCC 6205 / CBS 148.51 / DSM 1962 / NBRC 6347 / NRRL 1970)</name>
    <name type="common">Soil fungus</name>
    <dbReference type="NCBI Taxonomy" id="306901"/>
    <lineage>
        <taxon>Eukaryota</taxon>
        <taxon>Fungi</taxon>
        <taxon>Dikarya</taxon>
        <taxon>Ascomycota</taxon>
        <taxon>Pezizomycotina</taxon>
        <taxon>Sordariomycetes</taxon>
        <taxon>Sordariomycetidae</taxon>
        <taxon>Sordariales</taxon>
        <taxon>Chaetomiaceae</taxon>
        <taxon>Chaetomium</taxon>
    </lineage>
</organism>